<sequence length="247" mass="27541">MAGHSKWKNIQRRKNAQDAKRGKLFMKLAKEIYVAAKNGGGDPAANPSLRLVIEKAKAANMPGENIERAIKKATGNQEHTNYEEIRYEGYGPGGVAVMVVCLTDNKNRTAANVRSAFSKNGGNLGETGCVSYLFERKGLLVIDREQHNMEEDELLLLAIEAGAEEMETTDESFEIYTTPESFETVKEQLEQQGLTFASAEITMIPQTYTTLSGDELKKMLKLIDTLEDDDDVQEVYHNLDESVIEEQ</sequence>
<accession>A4IRB5</accession>
<feature type="chain" id="PRO_1000045313" description="Probable transcriptional regulatory protein GTNG_2524">
    <location>
        <begin position="1"/>
        <end position="247"/>
    </location>
</feature>
<feature type="region of interest" description="Disordered" evidence="2">
    <location>
        <begin position="1"/>
        <end position="21"/>
    </location>
</feature>
<feature type="compositionally biased region" description="Basic residues" evidence="2">
    <location>
        <begin position="1"/>
        <end position="14"/>
    </location>
</feature>
<organism>
    <name type="scientific">Geobacillus thermodenitrificans (strain NG80-2)</name>
    <dbReference type="NCBI Taxonomy" id="420246"/>
    <lineage>
        <taxon>Bacteria</taxon>
        <taxon>Bacillati</taxon>
        <taxon>Bacillota</taxon>
        <taxon>Bacilli</taxon>
        <taxon>Bacillales</taxon>
        <taxon>Anoxybacillaceae</taxon>
        <taxon>Geobacillus</taxon>
    </lineage>
</organism>
<protein>
    <recommendedName>
        <fullName evidence="1">Probable transcriptional regulatory protein GTNG_2524</fullName>
    </recommendedName>
</protein>
<gene>
    <name type="ordered locus">GTNG_2524</name>
</gene>
<keyword id="KW-0963">Cytoplasm</keyword>
<keyword id="KW-0238">DNA-binding</keyword>
<keyword id="KW-0804">Transcription</keyword>
<keyword id="KW-0805">Transcription regulation</keyword>
<reference key="1">
    <citation type="journal article" date="2007" name="Proc. Natl. Acad. Sci. U.S.A.">
        <title>Genome and proteome of long-chain alkane degrading Geobacillus thermodenitrificans NG80-2 isolated from a deep-subsurface oil reservoir.</title>
        <authorList>
            <person name="Feng L."/>
            <person name="Wang W."/>
            <person name="Cheng J."/>
            <person name="Ren Y."/>
            <person name="Zhao G."/>
            <person name="Gao C."/>
            <person name="Tang Y."/>
            <person name="Liu X."/>
            <person name="Han W."/>
            <person name="Peng X."/>
            <person name="Liu R."/>
            <person name="Wang L."/>
        </authorList>
    </citation>
    <scope>NUCLEOTIDE SEQUENCE [LARGE SCALE GENOMIC DNA]</scope>
    <source>
        <strain>NG80-2</strain>
    </source>
</reference>
<evidence type="ECO:0000255" key="1">
    <source>
        <dbReference type="HAMAP-Rule" id="MF_00693"/>
    </source>
</evidence>
<evidence type="ECO:0000256" key="2">
    <source>
        <dbReference type="SAM" id="MobiDB-lite"/>
    </source>
</evidence>
<name>Y2524_GEOTN</name>
<proteinExistence type="inferred from homology"/>
<dbReference type="EMBL" id="CP000557">
    <property type="protein sequence ID" value="ABO67869.1"/>
    <property type="molecule type" value="Genomic_DNA"/>
</dbReference>
<dbReference type="RefSeq" id="WP_008881051.1">
    <property type="nucleotide sequence ID" value="NC_009328.1"/>
</dbReference>
<dbReference type="SMR" id="A4IRB5"/>
<dbReference type="KEGG" id="gtn:GTNG_2524"/>
<dbReference type="eggNOG" id="COG0217">
    <property type="taxonomic scope" value="Bacteria"/>
</dbReference>
<dbReference type="HOGENOM" id="CLU_062974_2_2_9"/>
<dbReference type="Proteomes" id="UP000001578">
    <property type="component" value="Chromosome"/>
</dbReference>
<dbReference type="GO" id="GO:0005829">
    <property type="term" value="C:cytosol"/>
    <property type="evidence" value="ECO:0007669"/>
    <property type="project" value="TreeGrafter"/>
</dbReference>
<dbReference type="GO" id="GO:0003677">
    <property type="term" value="F:DNA binding"/>
    <property type="evidence" value="ECO:0007669"/>
    <property type="project" value="UniProtKB-UniRule"/>
</dbReference>
<dbReference type="GO" id="GO:0006355">
    <property type="term" value="P:regulation of DNA-templated transcription"/>
    <property type="evidence" value="ECO:0007669"/>
    <property type="project" value="UniProtKB-UniRule"/>
</dbReference>
<dbReference type="FunFam" id="1.10.10.200:FF:000002">
    <property type="entry name" value="Probable transcriptional regulatory protein CLM62_37755"/>
    <property type="match status" value="1"/>
</dbReference>
<dbReference type="FunFam" id="3.30.70.980:FF:000002">
    <property type="entry name" value="Probable transcriptional regulatory protein YebC"/>
    <property type="match status" value="1"/>
</dbReference>
<dbReference type="Gene3D" id="1.10.10.200">
    <property type="match status" value="1"/>
</dbReference>
<dbReference type="Gene3D" id="3.30.70.980">
    <property type="match status" value="2"/>
</dbReference>
<dbReference type="HAMAP" id="MF_00693">
    <property type="entry name" value="Transcrip_reg_TACO1"/>
    <property type="match status" value="1"/>
</dbReference>
<dbReference type="InterPro" id="IPR017856">
    <property type="entry name" value="Integrase-like_N"/>
</dbReference>
<dbReference type="InterPro" id="IPR048300">
    <property type="entry name" value="TACO1_YebC-like_2nd/3rd_dom"/>
</dbReference>
<dbReference type="InterPro" id="IPR049083">
    <property type="entry name" value="TACO1_YebC_N"/>
</dbReference>
<dbReference type="InterPro" id="IPR002876">
    <property type="entry name" value="Transcrip_reg_TACO1-like"/>
</dbReference>
<dbReference type="InterPro" id="IPR026564">
    <property type="entry name" value="Transcrip_reg_TACO1-like_dom3"/>
</dbReference>
<dbReference type="InterPro" id="IPR029072">
    <property type="entry name" value="YebC-like"/>
</dbReference>
<dbReference type="NCBIfam" id="NF001030">
    <property type="entry name" value="PRK00110.1"/>
    <property type="match status" value="1"/>
</dbReference>
<dbReference type="NCBIfam" id="NF009044">
    <property type="entry name" value="PRK12378.1"/>
    <property type="match status" value="1"/>
</dbReference>
<dbReference type="NCBIfam" id="TIGR01033">
    <property type="entry name" value="YebC/PmpR family DNA-binding transcriptional regulator"/>
    <property type="match status" value="1"/>
</dbReference>
<dbReference type="PANTHER" id="PTHR12532:SF6">
    <property type="entry name" value="TRANSCRIPTIONAL REGULATORY PROTEIN YEBC-RELATED"/>
    <property type="match status" value="1"/>
</dbReference>
<dbReference type="PANTHER" id="PTHR12532">
    <property type="entry name" value="TRANSLATIONAL ACTIVATOR OF CYTOCHROME C OXIDASE 1"/>
    <property type="match status" value="1"/>
</dbReference>
<dbReference type="Pfam" id="PF20772">
    <property type="entry name" value="TACO1_YebC_N"/>
    <property type="match status" value="1"/>
</dbReference>
<dbReference type="Pfam" id="PF01709">
    <property type="entry name" value="Transcrip_reg"/>
    <property type="match status" value="1"/>
</dbReference>
<dbReference type="SUPFAM" id="SSF75625">
    <property type="entry name" value="YebC-like"/>
    <property type="match status" value="1"/>
</dbReference>
<comment type="subcellular location">
    <subcellularLocation>
        <location evidence="1">Cytoplasm</location>
    </subcellularLocation>
</comment>
<comment type="similarity">
    <text evidence="1">Belongs to the TACO1 family.</text>
</comment>